<dbReference type="PIR" id="A01672">
    <property type="entry name" value="V6NJ1Y"/>
</dbReference>
<dbReference type="SMR" id="P01401"/>
<dbReference type="GO" id="GO:0005576">
    <property type="term" value="C:extracellular region"/>
    <property type="evidence" value="ECO:0007669"/>
    <property type="project" value="UniProtKB-SubCell"/>
</dbReference>
<dbReference type="GO" id="GO:0090729">
    <property type="term" value="F:toxin activity"/>
    <property type="evidence" value="ECO:0007669"/>
    <property type="project" value="UniProtKB-KW"/>
</dbReference>
<dbReference type="CDD" id="cd00206">
    <property type="entry name" value="TFP_snake_toxin"/>
    <property type="match status" value="1"/>
</dbReference>
<dbReference type="FunFam" id="2.10.60.10:FF:000024">
    <property type="entry name" value="Cytotoxin 1"/>
    <property type="match status" value="1"/>
</dbReference>
<dbReference type="Gene3D" id="2.10.60.10">
    <property type="entry name" value="CD59"/>
    <property type="match status" value="1"/>
</dbReference>
<dbReference type="InterPro" id="IPR003571">
    <property type="entry name" value="Snake_3FTx"/>
</dbReference>
<dbReference type="InterPro" id="IPR045860">
    <property type="entry name" value="Snake_toxin-like_sf"/>
</dbReference>
<dbReference type="InterPro" id="IPR018354">
    <property type="entry name" value="Snake_toxin_con_site"/>
</dbReference>
<dbReference type="InterPro" id="IPR054131">
    <property type="entry name" value="Toxin_cobra-type"/>
</dbReference>
<dbReference type="Pfam" id="PF21947">
    <property type="entry name" value="Toxin_cobra-type"/>
    <property type="match status" value="1"/>
</dbReference>
<dbReference type="SUPFAM" id="SSF57302">
    <property type="entry name" value="Snake toxin-like"/>
    <property type="match status" value="1"/>
</dbReference>
<dbReference type="PROSITE" id="PS00272">
    <property type="entry name" value="SNAKE_TOXIN"/>
    <property type="match status" value="1"/>
</dbReference>
<proteinExistence type="evidence at protein level"/>
<name>3NO2B_NAJHH</name>
<sequence>LTCLICPEKYCNKVHTCRNGENQCFKRFNERKLLGKRYTRGCAATCPEAKPREIVECCTTDRCNK</sequence>
<feature type="chain" id="PRO_0000093634" description="Weak toxin CM-11" evidence="3">
    <location>
        <begin position="1"/>
        <end position="65"/>
    </location>
</feature>
<feature type="disulfide bond" evidence="2">
    <location>
        <begin position="3"/>
        <end position="24"/>
    </location>
</feature>
<feature type="disulfide bond" evidence="2">
    <location>
        <begin position="6"/>
        <end position="11"/>
    </location>
</feature>
<feature type="disulfide bond" evidence="2">
    <location>
        <begin position="17"/>
        <end position="42"/>
    </location>
</feature>
<feature type="disulfide bond" evidence="2">
    <location>
        <begin position="46"/>
        <end position="57"/>
    </location>
</feature>
<feature type="disulfide bond" evidence="2">
    <location>
        <begin position="58"/>
        <end position="63"/>
    </location>
</feature>
<accession>P01401</accession>
<comment type="function">
    <text evidence="1">Binds with low affinity to muscular (alpha-1-beta-1-delta-epsilon/CHRNA1-CHRNB1-CHRND-CHRNE) and very low affinity to neuronal (alpha-7/CHRNA7) nicotinic acetylcholine receptor (nAChR).</text>
</comment>
<comment type="subcellular location">
    <subcellularLocation>
        <location evidence="3">Secreted</location>
    </subcellularLocation>
</comment>
<comment type="tissue specificity">
    <text evidence="4">Expressed by the venom gland.</text>
</comment>
<comment type="toxic dose">
    <text evidence="3">LD(50) is 13.4 mg/kg by subcutaneous injection.</text>
</comment>
<comment type="similarity">
    <text evidence="4">Belongs to the three-finger toxin family. Ancestral subfamily. Orphan group II sub-subfamily.</text>
</comment>
<protein>
    <recommendedName>
        <fullName>Weak toxin CM-11</fullName>
    </recommendedName>
</protein>
<organism>
    <name type="scientific">Naja haje haje</name>
    <name type="common">Egyptian cobra</name>
    <dbReference type="NCBI Taxonomy" id="8642"/>
    <lineage>
        <taxon>Eukaryota</taxon>
        <taxon>Metazoa</taxon>
        <taxon>Chordata</taxon>
        <taxon>Craniata</taxon>
        <taxon>Vertebrata</taxon>
        <taxon>Euteleostomi</taxon>
        <taxon>Lepidosauria</taxon>
        <taxon>Squamata</taxon>
        <taxon>Bifurcata</taxon>
        <taxon>Unidentata</taxon>
        <taxon>Episquamata</taxon>
        <taxon>Toxicofera</taxon>
        <taxon>Serpentes</taxon>
        <taxon>Colubroidea</taxon>
        <taxon>Elapidae</taxon>
        <taxon>Elapinae</taxon>
        <taxon>Naja</taxon>
    </lineage>
</organism>
<keyword id="KW-0903">Direct protein sequencing</keyword>
<keyword id="KW-1015">Disulfide bond</keyword>
<keyword id="KW-0964">Secreted</keyword>
<keyword id="KW-0800">Toxin</keyword>
<reference key="1">
    <citation type="journal article" date="1978" name="Eur. J. Biochem.">
        <title>Naja haje haje (Egyptian cobra) venom. Some properties and the complete primary structure of three toxins (CM-2, CM-11 and CM-12).</title>
        <authorList>
            <person name="Joubert F.J."/>
            <person name="Taljaard N."/>
        </authorList>
    </citation>
    <scope>PROTEIN SEQUENCE</scope>
    <scope>TOXIC DOSE</scope>
    <scope>SUBCELLULAR LOCATION</scope>
    <source>
        <tissue>Venom</tissue>
    </source>
</reference>
<evidence type="ECO:0000250" key="1">
    <source>
        <dbReference type="UniProtKB" id="O42255"/>
    </source>
</evidence>
<evidence type="ECO:0000250" key="2">
    <source>
        <dbReference type="UniProtKB" id="Q8AY51"/>
    </source>
</evidence>
<evidence type="ECO:0000269" key="3">
    <source>
    </source>
</evidence>
<evidence type="ECO:0000305" key="4"/>